<comment type="function">
    <text evidence="1">Global transcriptional regulator that plays a key role in stress response and exerts either positive or negative regulation of genes. Acts by interacting with the C-terminal domain of the alpha subunit of the RNA polymerase (RNAP). This interaction can enhance binding of RNAP to the promoter region of target genes and stimulate their transcription, or block interaction of RNAP with activator.</text>
</comment>
<comment type="subunit">
    <text evidence="1">Interacts with the C-terminal domain of the alpha subunit of the RNAP.</text>
</comment>
<comment type="subcellular location">
    <subcellularLocation>
        <location evidence="1">Cytoplasm</location>
    </subcellularLocation>
</comment>
<comment type="similarity">
    <text evidence="1">Belongs to the ArsC family. Spx subfamily.</text>
</comment>
<feature type="chain" id="PRO_0000162576" description="Global transcriptional regulator Spx">
    <location>
        <begin position="1"/>
        <end position="133"/>
    </location>
</feature>
<feature type="disulfide bond" description="Redox-active" evidence="1">
    <location>
        <begin position="10"/>
        <end position="13"/>
    </location>
</feature>
<dbReference type="EMBL" id="AE007317">
    <property type="protein sequence ID" value="AAL00066.1"/>
    <property type="molecule type" value="Genomic_DNA"/>
</dbReference>
<dbReference type="PIR" id="E98029">
    <property type="entry name" value="E98029"/>
</dbReference>
<dbReference type="RefSeq" id="NP_358855.1">
    <property type="nucleotide sequence ID" value="NC_003098.1"/>
</dbReference>
<dbReference type="RefSeq" id="WP_000631259.1">
    <property type="nucleotide sequence ID" value="NC_003098.1"/>
</dbReference>
<dbReference type="SMR" id="Q8DPA8"/>
<dbReference type="STRING" id="171101.spr1262"/>
<dbReference type="KEGG" id="spr:spr1262"/>
<dbReference type="PATRIC" id="fig|171101.6.peg.1369"/>
<dbReference type="eggNOG" id="COG1393">
    <property type="taxonomic scope" value="Bacteria"/>
</dbReference>
<dbReference type="HOGENOM" id="CLU_116644_1_1_9"/>
<dbReference type="Proteomes" id="UP000000586">
    <property type="component" value="Chromosome"/>
</dbReference>
<dbReference type="GO" id="GO:0005737">
    <property type="term" value="C:cytoplasm"/>
    <property type="evidence" value="ECO:0007669"/>
    <property type="project" value="UniProtKB-SubCell"/>
</dbReference>
<dbReference type="GO" id="GO:0045892">
    <property type="term" value="P:negative regulation of DNA-templated transcription"/>
    <property type="evidence" value="ECO:0007669"/>
    <property type="project" value="InterPro"/>
</dbReference>
<dbReference type="CDD" id="cd03032">
    <property type="entry name" value="ArsC_Spx"/>
    <property type="match status" value="1"/>
</dbReference>
<dbReference type="Gene3D" id="3.40.30.10">
    <property type="entry name" value="Glutaredoxin"/>
    <property type="match status" value="1"/>
</dbReference>
<dbReference type="HAMAP" id="MF_01132">
    <property type="entry name" value="Spx"/>
    <property type="match status" value="1"/>
</dbReference>
<dbReference type="InterPro" id="IPR006660">
    <property type="entry name" value="Arsenate_reductase-like"/>
</dbReference>
<dbReference type="InterPro" id="IPR023731">
    <property type="entry name" value="Spx"/>
</dbReference>
<dbReference type="InterPro" id="IPR036249">
    <property type="entry name" value="Thioredoxin-like_sf"/>
</dbReference>
<dbReference type="InterPro" id="IPR006504">
    <property type="entry name" value="Tscrpt_reg_Spx/MgsR"/>
</dbReference>
<dbReference type="NCBIfam" id="TIGR01617">
    <property type="entry name" value="arsC_related"/>
    <property type="match status" value="1"/>
</dbReference>
<dbReference type="NCBIfam" id="NF002459">
    <property type="entry name" value="PRK01655.1"/>
    <property type="match status" value="1"/>
</dbReference>
<dbReference type="PANTHER" id="PTHR30041">
    <property type="entry name" value="ARSENATE REDUCTASE"/>
    <property type="match status" value="1"/>
</dbReference>
<dbReference type="PANTHER" id="PTHR30041:SF7">
    <property type="entry name" value="GLOBAL TRANSCRIPTIONAL REGULATOR SPX"/>
    <property type="match status" value="1"/>
</dbReference>
<dbReference type="Pfam" id="PF03960">
    <property type="entry name" value="ArsC"/>
    <property type="match status" value="1"/>
</dbReference>
<dbReference type="SUPFAM" id="SSF52833">
    <property type="entry name" value="Thioredoxin-like"/>
    <property type="match status" value="1"/>
</dbReference>
<dbReference type="PROSITE" id="PS51353">
    <property type="entry name" value="ARSC"/>
    <property type="match status" value="1"/>
</dbReference>
<proteinExistence type="inferred from homology"/>
<keyword id="KW-0963">Cytoplasm</keyword>
<keyword id="KW-1015">Disulfide bond</keyword>
<keyword id="KW-0676">Redox-active center</keyword>
<keyword id="KW-1185">Reference proteome</keyword>
<keyword id="KW-0804">Transcription</keyword>
<keyword id="KW-0805">Transcription regulation</keyword>
<accession>Q8DPA8</accession>
<gene>
    <name evidence="1" type="primary">spx</name>
    <name type="ordered locus">spr1262</name>
</gene>
<evidence type="ECO:0000255" key="1">
    <source>
        <dbReference type="HAMAP-Rule" id="MF_01132"/>
    </source>
</evidence>
<reference key="1">
    <citation type="journal article" date="2001" name="J. Bacteriol.">
        <title>Genome of the bacterium Streptococcus pneumoniae strain R6.</title>
        <authorList>
            <person name="Hoskins J."/>
            <person name="Alborn W.E. Jr."/>
            <person name="Arnold J."/>
            <person name="Blaszczak L.C."/>
            <person name="Burgett S."/>
            <person name="DeHoff B.S."/>
            <person name="Estrem S.T."/>
            <person name="Fritz L."/>
            <person name="Fu D.-J."/>
            <person name="Fuller W."/>
            <person name="Geringer C."/>
            <person name="Gilmour R."/>
            <person name="Glass J.S."/>
            <person name="Khoja H."/>
            <person name="Kraft A.R."/>
            <person name="Lagace R.E."/>
            <person name="LeBlanc D.J."/>
            <person name="Lee L.N."/>
            <person name="Lefkowitz E.J."/>
            <person name="Lu J."/>
            <person name="Matsushima P."/>
            <person name="McAhren S.M."/>
            <person name="McHenney M."/>
            <person name="McLeaster K."/>
            <person name="Mundy C.W."/>
            <person name="Nicas T.I."/>
            <person name="Norris F.H."/>
            <person name="O'Gara M."/>
            <person name="Peery R.B."/>
            <person name="Robertson G.T."/>
            <person name="Rockey P."/>
            <person name="Sun P.-M."/>
            <person name="Winkler M.E."/>
            <person name="Yang Y."/>
            <person name="Young-Bellido M."/>
            <person name="Zhao G."/>
            <person name="Zook C.A."/>
            <person name="Baltz R.H."/>
            <person name="Jaskunas S.R."/>
            <person name="Rosteck P.R. Jr."/>
            <person name="Skatrud P.L."/>
            <person name="Glass J.I."/>
        </authorList>
    </citation>
    <scope>NUCLEOTIDE SEQUENCE [LARGE SCALE GENOMIC DNA]</scope>
    <source>
        <strain>ATCC BAA-255 / R6</strain>
    </source>
</reference>
<organism>
    <name type="scientific">Streptococcus pneumoniae (strain ATCC BAA-255 / R6)</name>
    <dbReference type="NCBI Taxonomy" id="171101"/>
    <lineage>
        <taxon>Bacteria</taxon>
        <taxon>Bacillati</taxon>
        <taxon>Bacillota</taxon>
        <taxon>Bacilli</taxon>
        <taxon>Lactobacillales</taxon>
        <taxon>Streptococcaceae</taxon>
        <taxon>Streptococcus</taxon>
    </lineage>
</organism>
<protein>
    <recommendedName>
        <fullName evidence="1">Global transcriptional regulator Spx</fullName>
    </recommendedName>
</protein>
<sequence>MITLFLSPSCTSCRKAKAWLEKHKVPFVEHNIMTSPLTRKELQHILSLTENGTDDIISTRSKIFQKLNIDVESISVSELLHLIEQYPSLLRRPIIIDAKRMQIGFNEDEIRAFLPRSYRKQELKEARMRAGIS</sequence>
<name>SPX_STRR6</name>